<reference key="1">
    <citation type="journal article" date="2004" name="Proc. Natl. Acad. Sci. U.S.A.">
        <title>Genomic plasticity of the causative agent of melioidosis, Burkholderia pseudomallei.</title>
        <authorList>
            <person name="Holden M.T.G."/>
            <person name="Titball R.W."/>
            <person name="Peacock S.J."/>
            <person name="Cerdeno-Tarraga A.-M."/>
            <person name="Atkins T."/>
            <person name="Crossman L.C."/>
            <person name="Pitt T."/>
            <person name="Churcher C."/>
            <person name="Mungall K.L."/>
            <person name="Bentley S.D."/>
            <person name="Sebaihia M."/>
            <person name="Thomson N.R."/>
            <person name="Bason N."/>
            <person name="Beacham I.R."/>
            <person name="Brooks K."/>
            <person name="Brown K.A."/>
            <person name="Brown N.F."/>
            <person name="Challis G.L."/>
            <person name="Cherevach I."/>
            <person name="Chillingworth T."/>
            <person name="Cronin A."/>
            <person name="Crossett B."/>
            <person name="Davis P."/>
            <person name="DeShazer D."/>
            <person name="Feltwell T."/>
            <person name="Fraser A."/>
            <person name="Hance Z."/>
            <person name="Hauser H."/>
            <person name="Holroyd S."/>
            <person name="Jagels K."/>
            <person name="Keith K.E."/>
            <person name="Maddison M."/>
            <person name="Moule S."/>
            <person name="Price C."/>
            <person name="Quail M.A."/>
            <person name="Rabbinowitsch E."/>
            <person name="Rutherford K."/>
            <person name="Sanders M."/>
            <person name="Simmonds M."/>
            <person name="Songsivilai S."/>
            <person name="Stevens K."/>
            <person name="Tumapa S."/>
            <person name="Vesaratchavest M."/>
            <person name="Whitehead S."/>
            <person name="Yeats C."/>
            <person name="Barrell B.G."/>
            <person name="Oyston P.C.F."/>
            <person name="Parkhill J."/>
        </authorList>
    </citation>
    <scope>NUCLEOTIDE SEQUENCE [LARGE SCALE GENOMIC DNA]</scope>
    <source>
        <strain>K96243</strain>
    </source>
</reference>
<protein>
    <recommendedName>
        <fullName evidence="1">Glycine dehydrogenase (decarboxylating)</fullName>
        <ecNumber evidence="1">1.4.4.2</ecNumber>
    </recommendedName>
    <alternativeName>
        <fullName evidence="1">Glycine cleavage system P-protein</fullName>
    </alternativeName>
    <alternativeName>
        <fullName evidence="1">Glycine decarboxylase</fullName>
    </alternativeName>
    <alternativeName>
        <fullName evidence="1">Glycine dehydrogenase (aminomethyl-transferring)</fullName>
    </alternativeName>
</protein>
<proteinExistence type="inferred from homology"/>
<keyword id="KW-0560">Oxidoreductase</keyword>
<keyword id="KW-0663">Pyridoxal phosphate</keyword>
<keyword id="KW-1185">Reference proteome</keyword>
<accession>Q63PL2</accession>
<gene>
    <name evidence="1" type="primary">gcvP</name>
    <name type="ordered locus">BPSL3362</name>
</gene>
<comment type="function">
    <text evidence="1">The glycine cleavage system catalyzes the degradation of glycine. The P protein binds the alpha-amino group of glycine through its pyridoxal phosphate cofactor; CO(2) is released and the remaining methylamine moiety is then transferred to the lipoamide cofactor of the H protein.</text>
</comment>
<comment type="catalytic activity">
    <reaction evidence="1">
        <text>N(6)-[(R)-lipoyl]-L-lysyl-[glycine-cleavage complex H protein] + glycine + H(+) = N(6)-[(R)-S(8)-aminomethyldihydrolipoyl]-L-lysyl-[glycine-cleavage complex H protein] + CO2</text>
        <dbReference type="Rhea" id="RHEA:24304"/>
        <dbReference type="Rhea" id="RHEA-COMP:10494"/>
        <dbReference type="Rhea" id="RHEA-COMP:10495"/>
        <dbReference type="ChEBI" id="CHEBI:15378"/>
        <dbReference type="ChEBI" id="CHEBI:16526"/>
        <dbReference type="ChEBI" id="CHEBI:57305"/>
        <dbReference type="ChEBI" id="CHEBI:83099"/>
        <dbReference type="ChEBI" id="CHEBI:83143"/>
        <dbReference type="EC" id="1.4.4.2"/>
    </reaction>
</comment>
<comment type="cofactor">
    <cofactor evidence="1">
        <name>pyridoxal 5'-phosphate</name>
        <dbReference type="ChEBI" id="CHEBI:597326"/>
    </cofactor>
</comment>
<comment type="subunit">
    <text evidence="1">The glycine cleavage system is composed of four proteins: P, T, L and H.</text>
</comment>
<comment type="similarity">
    <text evidence="1">Belongs to the GcvP family.</text>
</comment>
<evidence type="ECO:0000255" key="1">
    <source>
        <dbReference type="HAMAP-Rule" id="MF_00711"/>
    </source>
</evidence>
<name>GCSP_BURPS</name>
<feature type="chain" id="PRO_0000227098" description="Glycine dehydrogenase (decarboxylating)">
    <location>
        <begin position="1"/>
        <end position="975"/>
    </location>
</feature>
<feature type="modified residue" description="N6-(pyridoxal phosphate)lysine" evidence="1">
    <location>
        <position position="723"/>
    </location>
</feature>
<dbReference type="EC" id="1.4.4.2" evidence="1"/>
<dbReference type="EMBL" id="BX571965">
    <property type="protein sequence ID" value="CAH37375.1"/>
    <property type="molecule type" value="Genomic_DNA"/>
</dbReference>
<dbReference type="RefSeq" id="WP_004195877.1">
    <property type="nucleotide sequence ID" value="NZ_CP009538.1"/>
</dbReference>
<dbReference type="RefSeq" id="YP_109957.1">
    <property type="nucleotide sequence ID" value="NC_006350.1"/>
</dbReference>
<dbReference type="SMR" id="Q63PL2"/>
<dbReference type="STRING" id="272560.BPSL3362"/>
<dbReference type="GeneID" id="92980672"/>
<dbReference type="KEGG" id="bps:BPSL3362"/>
<dbReference type="PATRIC" id="fig|272560.51.peg.1838"/>
<dbReference type="eggNOG" id="COG0403">
    <property type="taxonomic scope" value="Bacteria"/>
</dbReference>
<dbReference type="eggNOG" id="COG1003">
    <property type="taxonomic scope" value="Bacteria"/>
</dbReference>
<dbReference type="Proteomes" id="UP000000605">
    <property type="component" value="Chromosome 1"/>
</dbReference>
<dbReference type="GO" id="GO:0005829">
    <property type="term" value="C:cytosol"/>
    <property type="evidence" value="ECO:0007669"/>
    <property type="project" value="TreeGrafter"/>
</dbReference>
<dbReference type="GO" id="GO:0005960">
    <property type="term" value="C:glycine cleavage complex"/>
    <property type="evidence" value="ECO:0007669"/>
    <property type="project" value="TreeGrafter"/>
</dbReference>
<dbReference type="GO" id="GO:0016594">
    <property type="term" value="F:glycine binding"/>
    <property type="evidence" value="ECO:0007669"/>
    <property type="project" value="TreeGrafter"/>
</dbReference>
<dbReference type="GO" id="GO:0004375">
    <property type="term" value="F:glycine dehydrogenase (decarboxylating) activity"/>
    <property type="evidence" value="ECO:0007669"/>
    <property type="project" value="UniProtKB-EC"/>
</dbReference>
<dbReference type="GO" id="GO:0030170">
    <property type="term" value="F:pyridoxal phosphate binding"/>
    <property type="evidence" value="ECO:0007669"/>
    <property type="project" value="TreeGrafter"/>
</dbReference>
<dbReference type="GO" id="GO:0019464">
    <property type="term" value="P:glycine decarboxylation via glycine cleavage system"/>
    <property type="evidence" value="ECO:0007669"/>
    <property type="project" value="UniProtKB-UniRule"/>
</dbReference>
<dbReference type="CDD" id="cd00613">
    <property type="entry name" value="GDC-P"/>
    <property type="match status" value="2"/>
</dbReference>
<dbReference type="FunFam" id="3.40.640.10:FF:000005">
    <property type="entry name" value="Glycine dehydrogenase (decarboxylating), mitochondrial"/>
    <property type="match status" value="1"/>
</dbReference>
<dbReference type="FunFam" id="3.90.1150.10:FF:000007">
    <property type="entry name" value="Glycine dehydrogenase (decarboxylating), mitochondrial"/>
    <property type="match status" value="1"/>
</dbReference>
<dbReference type="FunFam" id="3.40.640.10:FF:000007">
    <property type="entry name" value="glycine dehydrogenase (Decarboxylating), mitochondrial"/>
    <property type="match status" value="1"/>
</dbReference>
<dbReference type="Gene3D" id="3.90.1150.10">
    <property type="entry name" value="Aspartate Aminotransferase, domain 1"/>
    <property type="match status" value="2"/>
</dbReference>
<dbReference type="Gene3D" id="3.40.640.10">
    <property type="entry name" value="Type I PLP-dependent aspartate aminotransferase-like (Major domain)"/>
    <property type="match status" value="2"/>
</dbReference>
<dbReference type="HAMAP" id="MF_00711">
    <property type="entry name" value="GcvP"/>
    <property type="match status" value="1"/>
</dbReference>
<dbReference type="InterPro" id="IPR003437">
    <property type="entry name" value="GcvP"/>
</dbReference>
<dbReference type="InterPro" id="IPR049316">
    <property type="entry name" value="GDC-P_C"/>
</dbReference>
<dbReference type="InterPro" id="IPR049315">
    <property type="entry name" value="GDC-P_N"/>
</dbReference>
<dbReference type="InterPro" id="IPR020581">
    <property type="entry name" value="GDC_P"/>
</dbReference>
<dbReference type="InterPro" id="IPR015424">
    <property type="entry name" value="PyrdxlP-dep_Trfase"/>
</dbReference>
<dbReference type="InterPro" id="IPR015421">
    <property type="entry name" value="PyrdxlP-dep_Trfase_major"/>
</dbReference>
<dbReference type="InterPro" id="IPR015422">
    <property type="entry name" value="PyrdxlP-dep_Trfase_small"/>
</dbReference>
<dbReference type="NCBIfam" id="TIGR00461">
    <property type="entry name" value="gcvP"/>
    <property type="match status" value="1"/>
</dbReference>
<dbReference type="NCBIfam" id="NF003346">
    <property type="entry name" value="PRK04366.1"/>
    <property type="match status" value="1"/>
</dbReference>
<dbReference type="PANTHER" id="PTHR11773:SF1">
    <property type="entry name" value="GLYCINE DEHYDROGENASE (DECARBOXYLATING), MITOCHONDRIAL"/>
    <property type="match status" value="1"/>
</dbReference>
<dbReference type="PANTHER" id="PTHR11773">
    <property type="entry name" value="GLYCINE DEHYDROGENASE, DECARBOXYLATING"/>
    <property type="match status" value="1"/>
</dbReference>
<dbReference type="Pfam" id="PF21478">
    <property type="entry name" value="GcvP2_C"/>
    <property type="match status" value="1"/>
</dbReference>
<dbReference type="Pfam" id="PF02347">
    <property type="entry name" value="GDC-P"/>
    <property type="match status" value="2"/>
</dbReference>
<dbReference type="SUPFAM" id="SSF53383">
    <property type="entry name" value="PLP-dependent transferases"/>
    <property type="match status" value="2"/>
</dbReference>
<organism>
    <name type="scientific">Burkholderia pseudomallei (strain K96243)</name>
    <dbReference type="NCBI Taxonomy" id="272560"/>
    <lineage>
        <taxon>Bacteria</taxon>
        <taxon>Pseudomonadati</taxon>
        <taxon>Pseudomonadota</taxon>
        <taxon>Betaproteobacteria</taxon>
        <taxon>Burkholderiales</taxon>
        <taxon>Burkholderiaceae</taxon>
        <taxon>Burkholderia</taxon>
        <taxon>pseudomallei group</taxon>
    </lineage>
</organism>
<sequence>MKLEHPDRLMNRTPLSLAALETHDAFAERHIGPDAASQQAMLDTLGFATRAALIDAVIPASIRRAETLPLGPFAQPKSEAEALAALRALADKNQVFRSYIGQGYYDTHTPAVILRNVLENPAWYTAYTPYQPEISQGRLEALLNFQQMVADLTGLEISNASLLDEATAAAEAMTLLQRVGKPQSNVFYVADDVLPQTLEVIKTRAKPIGIEVKSGPAADAAAANAFGVLLQYPGANGDVRDYRALADAIHAAGGHVVVAADILALTVLMPPGEWGADVAVGNTQRFGVPMGFGGPHAAYMAVRDEFKRQMPGRLVGVTVDAQGKPALRLALQTREQHIRREKATSNVCTAQALLAIMASMYAVYHGPRGLKTIALRVNRIAALLAAGIRHLGYATVNDTFFDTLTIDTGARTAQLHAFAQAKRINLRRAGDTRVGVSVDETTTRADLADLLTIFAQAAGATAPDIDALDAGLLPAPALPPSLERTSAYLTHHVFNRHHSETEMLRYLRSLSDKDLALDRSMIPLGSCTMKLNATSEMLPVTWPEFGRIHPFAPAEQTVGYREMIDQLEQMLVAATGYAAVSLQPNAGSQGEYAGLLIIHAYHESRGESHRDVCLIPASAHGTNPASAHMAGMKVVVVACDAQGNVDIADLKAKADAHSHDLAAIMITYPSTHGVFEQNVREICEIVHAHGGQVYVDGANMNAMVGLTAPGQFGGDVSHLNLHKTFCIPHGGGGPGVGPVAVGPHLAKFLPNQRSTGYARGEDGIGAVSAAPYGSASILPISWMYIAMMGAKNLTAATETAILNANYIAKRLAPHYPVLYSGPGGLVAHECILDLRPIKDSSGITVDDVAKRLMDYGFHAPTMSFPVPGTLMVEPTESESQEELDRFIAAMIAIRDEIRAVEEGRADREDNPLRHAPHTAAVVTANEWPHAYSREQAAFPVASLVANKYWPPVGRADNAYGDRNLFCSCVPVSDYA</sequence>